<sequence length="378" mass="41398">MSTPRTIVGVSGGVDSSVAAWKLAQDGEPIAGLFMQNWADDGSGDCRAEDDRRDAVAVCGVLGIPFHFRDFSGEYWSGVFEHFLAEYAAGRTPNPDVLCNREVKFKHFLEAAQALGAERIATGHYARVAHLGGRWRLLRGADRNKDQSYFLHQLGQSQLAATLFPIGELEKSALRRIAQDAGLPTHAKKDSTGICFIGERDFREFLGRYLPARTGEIRDPQGQRIAEHPGVFYFTLGQREGLNIGGVRGRAAAPWYVVGKDVGSNVLYVDQDRDSPLLQSRWLQSEQAHWVTGAPPARSFSCTAQTRYRQPDEPCTVTVQDDGTLQVNFERPQRAVTPGQSLVLYDGEECLGGAVIAATDAPLERQLAGSSFSSEVVA</sequence>
<proteinExistence type="inferred from homology"/>
<keyword id="KW-0067">ATP-binding</keyword>
<keyword id="KW-0963">Cytoplasm</keyword>
<keyword id="KW-1015">Disulfide bond</keyword>
<keyword id="KW-0547">Nucleotide-binding</keyword>
<keyword id="KW-0694">RNA-binding</keyword>
<keyword id="KW-0808">Transferase</keyword>
<keyword id="KW-0819">tRNA processing</keyword>
<keyword id="KW-0820">tRNA-binding</keyword>
<protein>
    <recommendedName>
        <fullName evidence="1">tRNA-specific 2-thiouridylase MnmA</fullName>
        <ecNumber evidence="1">2.8.1.13</ecNumber>
    </recommendedName>
</protein>
<feature type="chain" id="PRO_1000009598" description="tRNA-specific 2-thiouridylase MnmA">
    <location>
        <begin position="1"/>
        <end position="378"/>
    </location>
</feature>
<feature type="region of interest" description="Interaction with target base in tRNA" evidence="1">
    <location>
        <begin position="94"/>
        <end position="96"/>
    </location>
</feature>
<feature type="region of interest" description="Interaction with tRNA" evidence="1">
    <location>
        <begin position="145"/>
        <end position="147"/>
    </location>
</feature>
<feature type="region of interest" description="Interaction with tRNA" evidence="1">
    <location>
        <begin position="307"/>
        <end position="308"/>
    </location>
</feature>
<feature type="active site" description="Nucleophile" evidence="1">
    <location>
        <position position="99"/>
    </location>
</feature>
<feature type="active site" description="Cysteine persulfide intermediate" evidence="1">
    <location>
        <position position="195"/>
    </location>
</feature>
<feature type="binding site" evidence="1">
    <location>
        <begin position="9"/>
        <end position="16"/>
    </location>
    <ligand>
        <name>ATP</name>
        <dbReference type="ChEBI" id="CHEBI:30616"/>
    </ligand>
</feature>
<feature type="binding site" evidence="1">
    <location>
        <position position="35"/>
    </location>
    <ligand>
        <name>ATP</name>
        <dbReference type="ChEBI" id="CHEBI:30616"/>
    </ligand>
</feature>
<feature type="binding site" evidence="1">
    <location>
        <position position="123"/>
    </location>
    <ligand>
        <name>ATP</name>
        <dbReference type="ChEBI" id="CHEBI:30616"/>
    </ligand>
</feature>
<feature type="site" description="Interaction with tRNA" evidence="1">
    <location>
        <position position="124"/>
    </location>
</feature>
<feature type="site" description="Interaction with tRNA" evidence="1">
    <location>
        <position position="340"/>
    </location>
</feature>
<feature type="disulfide bond" description="Alternate" evidence="1">
    <location>
        <begin position="99"/>
        <end position="195"/>
    </location>
</feature>
<organism>
    <name type="scientific">Xanthomonas campestris pv. campestris (strain 8004)</name>
    <dbReference type="NCBI Taxonomy" id="314565"/>
    <lineage>
        <taxon>Bacteria</taxon>
        <taxon>Pseudomonadati</taxon>
        <taxon>Pseudomonadota</taxon>
        <taxon>Gammaproteobacteria</taxon>
        <taxon>Lysobacterales</taxon>
        <taxon>Lysobacteraceae</taxon>
        <taxon>Xanthomonas</taxon>
    </lineage>
</organism>
<dbReference type="EC" id="2.8.1.13" evidence="1"/>
<dbReference type="EMBL" id="CP000050">
    <property type="protein sequence ID" value="AAY49276.1"/>
    <property type="molecule type" value="Genomic_DNA"/>
</dbReference>
<dbReference type="RefSeq" id="WP_011037128.1">
    <property type="nucleotide sequence ID" value="NZ_CP155948.1"/>
</dbReference>
<dbReference type="SMR" id="Q4UUJ7"/>
<dbReference type="KEGG" id="xcb:XC_2221"/>
<dbReference type="HOGENOM" id="CLU_035188_1_0_6"/>
<dbReference type="Proteomes" id="UP000000420">
    <property type="component" value="Chromosome"/>
</dbReference>
<dbReference type="GO" id="GO:0005737">
    <property type="term" value="C:cytoplasm"/>
    <property type="evidence" value="ECO:0007669"/>
    <property type="project" value="UniProtKB-SubCell"/>
</dbReference>
<dbReference type="GO" id="GO:0005524">
    <property type="term" value="F:ATP binding"/>
    <property type="evidence" value="ECO:0007669"/>
    <property type="project" value="UniProtKB-KW"/>
</dbReference>
<dbReference type="GO" id="GO:0000049">
    <property type="term" value="F:tRNA binding"/>
    <property type="evidence" value="ECO:0007669"/>
    <property type="project" value="UniProtKB-KW"/>
</dbReference>
<dbReference type="GO" id="GO:0103016">
    <property type="term" value="F:tRNA-uridine 2-sulfurtransferase activity"/>
    <property type="evidence" value="ECO:0007669"/>
    <property type="project" value="UniProtKB-EC"/>
</dbReference>
<dbReference type="GO" id="GO:0002143">
    <property type="term" value="P:tRNA wobble position uridine thiolation"/>
    <property type="evidence" value="ECO:0007669"/>
    <property type="project" value="TreeGrafter"/>
</dbReference>
<dbReference type="CDD" id="cd01998">
    <property type="entry name" value="MnmA_TRMU-like"/>
    <property type="match status" value="1"/>
</dbReference>
<dbReference type="FunFam" id="2.30.30.280:FF:000001">
    <property type="entry name" value="tRNA-specific 2-thiouridylase MnmA"/>
    <property type="match status" value="1"/>
</dbReference>
<dbReference type="FunFam" id="2.40.30.10:FF:000023">
    <property type="entry name" value="tRNA-specific 2-thiouridylase MnmA"/>
    <property type="match status" value="1"/>
</dbReference>
<dbReference type="FunFam" id="3.40.50.620:FF:000004">
    <property type="entry name" value="tRNA-specific 2-thiouridylase MnmA"/>
    <property type="match status" value="1"/>
</dbReference>
<dbReference type="Gene3D" id="2.30.30.280">
    <property type="entry name" value="Adenine nucleotide alpha hydrolases-like domains"/>
    <property type="match status" value="1"/>
</dbReference>
<dbReference type="Gene3D" id="3.40.50.620">
    <property type="entry name" value="HUPs"/>
    <property type="match status" value="1"/>
</dbReference>
<dbReference type="Gene3D" id="2.40.30.10">
    <property type="entry name" value="Translation factors"/>
    <property type="match status" value="1"/>
</dbReference>
<dbReference type="HAMAP" id="MF_00144">
    <property type="entry name" value="tRNA_thiouridyl_MnmA"/>
    <property type="match status" value="1"/>
</dbReference>
<dbReference type="InterPro" id="IPR004506">
    <property type="entry name" value="MnmA-like"/>
</dbReference>
<dbReference type="InterPro" id="IPR046885">
    <property type="entry name" value="MnmA-like_C"/>
</dbReference>
<dbReference type="InterPro" id="IPR046884">
    <property type="entry name" value="MnmA-like_central"/>
</dbReference>
<dbReference type="InterPro" id="IPR023382">
    <property type="entry name" value="MnmA-like_central_sf"/>
</dbReference>
<dbReference type="InterPro" id="IPR014729">
    <property type="entry name" value="Rossmann-like_a/b/a_fold"/>
</dbReference>
<dbReference type="NCBIfam" id="NF001138">
    <property type="entry name" value="PRK00143.1"/>
    <property type="match status" value="1"/>
</dbReference>
<dbReference type="NCBIfam" id="TIGR00420">
    <property type="entry name" value="trmU"/>
    <property type="match status" value="1"/>
</dbReference>
<dbReference type="PANTHER" id="PTHR11933:SF5">
    <property type="entry name" value="MITOCHONDRIAL TRNA-SPECIFIC 2-THIOURIDYLASE 1"/>
    <property type="match status" value="1"/>
</dbReference>
<dbReference type="PANTHER" id="PTHR11933">
    <property type="entry name" value="TRNA 5-METHYLAMINOMETHYL-2-THIOURIDYLATE -METHYLTRANSFERASE"/>
    <property type="match status" value="1"/>
</dbReference>
<dbReference type="Pfam" id="PF03054">
    <property type="entry name" value="tRNA_Me_trans"/>
    <property type="match status" value="1"/>
</dbReference>
<dbReference type="Pfam" id="PF20258">
    <property type="entry name" value="tRNA_Me_trans_C"/>
    <property type="match status" value="1"/>
</dbReference>
<dbReference type="Pfam" id="PF20259">
    <property type="entry name" value="tRNA_Me_trans_M"/>
    <property type="match status" value="1"/>
</dbReference>
<dbReference type="SUPFAM" id="SSF52402">
    <property type="entry name" value="Adenine nucleotide alpha hydrolases-like"/>
    <property type="match status" value="1"/>
</dbReference>
<name>MNMA_XANC8</name>
<comment type="function">
    <text evidence="1">Catalyzes the 2-thiolation of uridine at the wobble position (U34) of tRNA, leading to the formation of s(2)U34.</text>
</comment>
<comment type="catalytic activity">
    <reaction evidence="1">
        <text>S-sulfanyl-L-cysteinyl-[protein] + uridine(34) in tRNA + AH2 + ATP = 2-thiouridine(34) in tRNA + L-cysteinyl-[protein] + A + AMP + diphosphate + H(+)</text>
        <dbReference type="Rhea" id="RHEA:47032"/>
        <dbReference type="Rhea" id="RHEA-COMP:10131"/>
        <dbReference type="Rhea" id="RHEA-COMP:11726"/>
        <dbReference type="Rhea" id="RHEA-COMP:11727"/>
        <dbReference type="Rhea" id="RHEA-COMP:11728"/>
        <dbReference type="ChEBI" id="CHEBI:13193"/>
        <dbReference type="ChEBI" id="CHEBI:15378"/>
        <dbReference type="ChEBI" id="CHEBI:17499"/>
        <dbReference type="ChEBI" id="CHEBI:29950"/>
        <dbReference type="ChEBI" id="CHEBI:30616"/>
        <dbReference type="ChEBI" id="CHEBI:33019"/>
        <dbReference type="ChEBI" id="CHEBI:61963"/>
        <dbReference type="ChEBI" id="CHEBI:65315"/>
        <dbReference type="ChEBI" id="CHEBI:87170"/>
        <dbReference type="ChEBI" id="CHEBI:456215"/>
        <dbReference type="EC" id="2.8.1.13"/>
    </reaction>
</comment>
<comment type="subcellular location">
    <subcellularLocation>
        <location evidence="1">Cytoplasm</location>
    </subcellularLocation>
</comment>
<comment type="similarity">
    <text evidence="1">Belongs to the MnmA/TRMU family.</text>
</comment>
<gene>
    <name evidence="1" type="primary">mnmA</name>
    <name type="synonym">trmU</name>
    <name type="ordered locus">XC_2221</name>
</gene>
<evidence type="ECO:0000255" key="1">
    <source>
        <dbReference type="HAMAP-Rule" id="MF_00144"/>
    </source>
</evidence>
<reference key="1">
    <citation type="journal article" date="2005" name="Genome Res.">
        <title>Comparative and functional genomic analyses of the pathogenicity of phytopathogen Xanthomonas campestris pv. campestris.</title>
        <authorList>
            <person name="Qian W."/>
            <person name="Jia Y."/>
            <person name="Ren S.-X."/>
            <person name="He Y.-Q."/>
            <person name="Feng J.-X."/>
            <person name="Lu L.-F."/>
            <person name="Sun Q."/>
            <person name="Ying G."/>
            <person name="Tang D.-J."/>
            <person name="Tang H."/>
            <person name="Wu W."/>
            <person name="Hao P."/>
            <person name="Wang L."/>
            <person name="Jiang B.-L."/>
            <person name="Zeng S."/>
            <person name="Gu W.-Y."/>
            <person name="Lu G."/>
            <person name="Rong L."/>
            <person name="Tian Y."/>
            <person name="Yao Z."/>
            <person name="Fu G."/>
            <person name="Chen B."/>
            <person name="Fang R."/>
            <person name="Qiang B."/>
            <person name="Chen Z."/>
            <person name="Zhao G.-P."/>
            <person name="Tang J.-L."/>
            <person name="He C."/>
        </authorList>
    </citation>
    <scope>NUCLEOTIDE SEQUENCE [LARGE SCALE GENOMIC DNA]</scope>
    <source>
        <strain>8004</strain>
    </source>
</reference>
<accession>Q4UUJ7</accession>